<dbReference type="EC" id="3.5.1.88" evidence="1"/>
<dbReference type="EMBL" id="CP001164">
    <property type="protein sequence ID" value="ACI39194.1"/>
    <property type="molecule type" value="Genomic_DNA"/>
</dbReference>
<dbReference type="RefSeq" id="WP_000114984.1">
    <property type="nucleotide sequence ID" value="NC_011353.1"/>
</dbReference>
<dbReference type="SMR" id="B5YT06"/>
<dbReference type="GeneID" id="89518132"/>
<dbReference type="KEGG" id="ecf:ECH74115_4609"/>
<dbReference type="HOGENOM" id="CLU_061901_2_1_6"/>
<dbReference type="GO" id="GO:0046872">
    <property type="term" value="F:metal ion binding"/>
    <property type="evidence" value="ECO:0007669"/>
    <property type="project" value="UniProtKB-KW"/>
</dbReference>
<dbReference type="GO" id="GO:0042586">
    <property type="term" value="F:peptide deformylase activity"/>
    <property type="evidence" value="ECO:0007669"/>
    <property type="project" value="UniProtKB-UniRule"/>
</dbReference>
<dbReference type="GO" id="GO:0043686">
    <property type="term" value="P:co-translational protein modification"/>
    <property type="evidence" value="ECO:0007669"/>
    <property type="project" value="TreeGrafter"/>
</dbReference>
<dbReference type="GO" id="GO:0006412">
    <property type="term" value="P:translation"/>
    <property type="evidence" value="ECO:0007669"/>
    <property type="project" value="UniProtKB-UniRule"/>
</dbReference>
<dbReference type="CDD" id="cd00487">
    <property type="entry name" value="Pep_deformylase"/>
    <property type="match status" value="1"/>
</dbReference>
<dbReference type="FunFam" id="3.90.45.10:FF:000001">
    <property type="entry name" value="Peptide deformylase"/>
    <property type="match status" value="1"/>
</dbReference>
<dbReference type="Gene3D" id="3.90.45.10">
    <property type="entry name" value="Peptide deformylase"/>
    <property type="match status" value="1"/>
</dbReference>
<dbReference type="HAMAP" id="MF_00163">
    <property type="entry name" value="Pep_deformylase"/>
    <property type="match status" value="1"/>
</dbReference>
<dbReference type="InterPro" id="IPR023635">
    <property type="entry name" value="Peptide_deformylase"/>
</dbReference>
<dbReference type="InterPro" id="IPR036821">
    <property type="entry name" value="Peptide_deformylase_sf"/>
</dbReference>
<dbReference type="NCBIfam" id="TIGR00079">
    <property type="entry name" value="pept_deformyl"/>
    <property type="match status" value="1"/>
</dbReference>
<dbReference type="NCBIfam" id="NF001159">
    <property type="entry name" value="PRK00150.1-3"/>
    <property type="match status" value="1"/>
</dbReference>
<dbReference type="PANTHER" id="PTHR10458">
    <property type="entry name" value="PEPTIDE DEFORMYLASE"/>
    <property type="match status" value="1"/>
</dbReference>
<dbReference type="PANTHER" id="PTHR10458:SF21">
    <property type="entry name" value="PEPTIDE DEFORMYLASE"/>
    <property type="match status" value="1"/>
</dbReference>
<dbReference type="Pfam" id="PF01327">
    <property type="entry name" value="Pep_deformylase"/>
    <property type="match status" value="1"/>
</dbReference>
<dbReference type="PIRSF" id="PIRSF004749">
    <property type="entry name" value="Pep_def"/>
    <property type="match status" value="1"/>
</dbReference>
<dbReference type="PRINTS" id="PR01576">
    <property type="entry name" value="PDEFORMYLASE"/>
</dbReference>
<dbReference type="SUPFAM" id="SSF56420">
    <property type="entry name" value="Peptide deformylase"/>
    <property type="match status" value="1"/>
</dbReference>
<name>DEF_ECO5E</name>
<gene>
    <name evidence="1" type="primary">def</name>
    <name type="ordered locus">ECH74115_4609</name>
</gene>
<comment type="function">
    <text evidence="1">Removes the formyl group from the N-terminal Met of newly synthesized proteins. Requires at least a dipeptide for an efficient rate of reaction. N-terminal L-methionine is a prerequisite for activity but the enzyme has broad specificity at other positions.</text>
</comment>
<comment type="catalytic activity">
    <reaction evidence="1">
        <text>N-terminal N-formyl-L-methionyl-[peptide] + H2O = N-terminal L-methionyl-[peptide] + formate</text>
        <dbReference type="Rhea" id="RHEA:24420"/>
        <dbReference type="Rhea" id="RHEA-COMP:10639"/>
        <dbReference type="Rhea" id="RHEA-COMP:10640"/>
        <dbReference type="ChEBI" id="CHEBI:15377"/>
        <dbReference type="ChEBI" id="CHEBI:15740"/>
        <dbReference type="ChEBI" id="CHEBI:49298"/>
        <dbReference type="ChEBI" id="CHEBI:64731"/>
        <dbReference type="EC" id="3.5.1.88"/>
    </reaction>
</comment>
<comment type="cofactor">
    <cofactor evidence="1">
        <name>Fe(2+)</name>
        <dbReference type="ChEBI" id="CHEBI:29033"/>
    </cofactor>
    <text evidence="1">Binds 1 Fe(2+) ion.</text>
</comment>
<comment type="similarity">
    <text evidence="1">Belongs to the polypeptide deformylase family.</text>
</comment>
<protein>
    <recommendedName>
        <fullName evidence="1">Peptide deformylase</fullName>
        <shortName evidence="1">PDF</shortName>
        <ecNumber evidence="1">3.5.1.88</ecNumber>
    </recommendedName>
    <alternativeName>
        <fullName evidence="1">Polypeptide deformylase</fullName>
    </alternativeName>
</protein>
<proteinExistence type="inferred from homology"/>
<organism>
    <name type="scientific">Escherichia coli O157:H7 (strain EC4115 / EHEC)</name>
    <dbReference type="NCBI Taxonomy" id="444450"/>
    <lineage>
        <taxon>Bacteria</taxon>
        <taxon>Pseudomonadati</taxon>
        <taxon>Pseudomonadota</taxon>
        <taxon>Gammaproteobacteria</taxon>
        <taxon>Enterobacterales</taxon>
        <taxon>Enterobacteriaceae</taxon>
        <taxon>Escherichia</taxon>
    </lineage>
</organism>
<sequence length="169" mass="19328">MSVLQVLHIPDERLRKVAKPVEEVNAEIQRIVDDMFETMYAEEGIGLAATQVDIHQRIIVIDVSENRDERLVLINPELLEKSGETGIEEGCLSIPEQRALVPRAEKVKIRALDRDGKPFELEADGLLAICIQHEMDHLVGKLFMDYLSPLKQQRIRQKVEKLDRLKARA</sequence>
<accession>B5YT06</accession>
<reference key="1">
    <citation type="journal article" date="2011" name="Proc. Natl. Acad. Sci. U.S.A.">
        <title>Genomic anatomy of Escherichia coli O157:H7 outbreaks.</title>
        <authorList>
            <person name="Eppinger M."/>
            <person name="Mammel M.K."/>
            <person name="Leclerc J.E."/>
            <person name="Ravel J."/>
            <person name="Cebula T.A."/>
        </authorList>
    </citation>
    <scope>NUCLEOTIDE SEQUENCE [LARGE SCALE GENOMIC DNA]</scope>
    <source>
        <strain>EC4115 / EHEC</strain>
    </source>
</reference>
<feature type="chain" id="PRO_1000097306" description="Peptide deformylase">
    <location>
        <begin position="1"/>
        <end position="169"/>
    </location>
</feature>
<feature type="active site" evidence="1">
    <location>
        <position position="134"/>
    </location>
</feature>
<feature type="binding site" evidence="1">
    <location>
        <position position="91"/>
    </location>
    <ligand>
        <name>Fe cation</name>
        <dbReference type="ChEBI" id="CHEBI:24875"/>
    </ligand>
</feature>
<feature type="binding site" evidence="1">
    <location>
        <position position="133"/>
    </location>
    <ligand>
        <name>Fe cation</name>
        <dbReference type="ChEBI" id="CHEBI:24875"/>
    </ligand>
</feature>
<feature type="binding site" evidence="1">
    <location>
        <position position="137"/>
    </location>
    <ligand>
        <name>Fe cation</name>
        <dbReference type="ChEBI" id="CHEBI:24875"/>
    </ligand>
</feature>
<keyword id="KW-0378">Hydrolase</keyword>
<keyword id="KW-0408">Iron</keyword>
<keyword id="KW-0479">Metal-binding</keyword>
<keyword id="KW-0648">Protein biosynthesis</keyword>
<evidence type="ECO:0000255" key="1">
    <source>
        <dbReference type="HAMAP-Rule" id="MF_00163"/>
    </source>
</evidence>